<dbReference type="EMBL" id="U77937">
    <property type="protein sequence ID" value="AAC64859.1"/>
    <property type="molecule type" value="mRNA"/>
</dbReference>
<dbReference type="PIR" id="T11856">
    <property type="entry name" value="T11856"/>
</dbReference>
<dbReference type="SMR" id="P55843"/>
<dbReference type="VEuPathDB" id="TriTrypDB:TcIL3000.11.11880"/>
<dbReference type="VEuPathDB" id="TriTrypDB:TcIL3000.A.H_000974600"/>
<dbReference type="GO" id="GO:0022625">
    <property type="term" value="C:cytosolic large ribosomal subunit"/>
    <property type="evidence" value="ECO:0007669"/>
    <property type="project" value="TreeGrafter"/>
</dbReference>
<dbReference type="GO" id="GO:0003723">
    <property type="term" value="F:RNA binding"/>
    <property type="evidence" value="ECO:0007669"/>
    <property type="project" value="InterPro"/>
</dbReference>
<dbReference type="GO" id="GO:0003735">
    <property type="term" value="F:structural constituent of ribosome"/>
    <property type="evidence" value="ECO:0007669"/>
    <property type="project" value="InterPro"/>
</dbReference>
<dbReference type="GO" id="GO:0042273">
    <property type="term" value="P:ribosomal large subunit biogenesis"/>
    <property type="evidence" value="ECO:0007669"/>
    <property type="project" value="TreeGrafter"/>
</dbReference>
<dbReference type="GO" id="GO:0006412">
    <property type="term" value="P:translation"/>
    <property type="evidence" value="ECO:0007669"/>
    <property type="project" value="InterPro"/>
</dbReference>
<dbReference type="CDD" id="cd06088">
    <property type="entry name" value="KOW_RPL14"/>
    <property type="match status" value="1"/>
</dbReference>
<dbReference type="Gene3D" id="2.30.30.30">
    <property type="match status" value="1"/>
</dbReference>
<dbReference type="InterPro" id="IPR005824">
    <property type="entry name" value="KOW"/>
</dbReference>
<dbReference type="InterPro" id="IPR014722">
    <property type="entry name" value="Rib_uL2_dom2"/>
</dbReference>
<dbReference type="InterPro" id="IPR039660">
    <property type="entry name" value="Ribosomal_eL14"/>
</dbReference>
<dbReference type="InterPro" id="IPR002784">
    <property type="entry name" value="Ribosomal_eL14_dom"/>
</dbReference>
<dbReference type="InterPro" id="IPR041985">
    <property type="entry name" value="Ribosomal_eL14_KOW"/>
</dbReference>
<dbReference type="InterPro" id="IPR008991">
    <property type="entry name" value="Translation_prot_SH3-like_sf"/>
</dbReference>
<dbReference type="PANTHER" id="PTHR11127">
    <property type="entry name" value="60S RIBOSOMAL PROTEIN L14"/>
    <property type="match status" value="1"/>
</dbReference>
<dbReference type="PANTHER" id="PTHR11127:SF2">
    <property type="entry name" value="LARGE RIBOSOMAL SUBUNIT PROTEIN EL14"/>
    <property type="match status" value="1"/>
</dbReference>
<dbReference type="Pfam" id="PF00467">
    <property type="entry name" value="KOW"/>
    <property type="match status" value="1"/>
</dbReference>
<dbReference type="Pfam" id="PF01929">
    <property type="entry name" value="Ribosomal_L14e"/>
    <property type="match status" value="1"/>
</dbReference>
<dbReference type="SUPFAM" id="SSF50104">
    <property type="entry name" value="Translation proteins SH3-like domain"/>
    <property type="match status" value="1"/>
</dbReference>
<proteinExistence type="evidence at transcript level"/>
<sequence length="184" mass="21009">MVKANYIRAGRLVRIIRGPRQDRVGVIVDIVDANRVLVENPSDVKMWRHVQSLKNVEPLRLCVPISRNCSSKVLKEAMATAKTLEKYANTKSAIRIAAKKAFAESTDFERYQLRVAKRSRAYWSRKIFDENDKKNPVSWHKVALKKLQKNAKKVDSTPAAKKRIEKARAARKAKPTAAKEKSKK</sequence>
<accession>P55843</accession>
<comment type="similarity">
    <text evidence="2">Belongs to the eukaryotic ribosomal protein eL14 family.</text>
</comment>
<name>RL14_TRYCO</name>
<evidence type="ECO:0000256" key="1">
    <source>
        <dbReference type="SAM" id="MobiDB-lite"/>
    </source>
</evidence>
<evidence type="ECO:0000305" key="2"/>
<organism>
    <name type="scientific">Trypanosoma congolense</name>
    <dbReference type="NCBI Taxonomy" id="5692"/>
    <lineage>
        <taxon>Eukaryota</taxon>
        <taxon>Discoba</taxon>
        <taxon>Euglenozoa</taxon>
        <taxon>Kinetoplastea</taxon>
        <taxon>Metakinetoplastina</taxon>
        <taxon>Trypanosomatida</taxon>
        <taxon>Trypanosomatidae</taxon>
        <taxon>Trypanosoma</taxon>
        <taxon>Nannomonas</taxon>
    </lineage>
</organism>
<feature type="chain" id="PRO_0000132040" description="Large ribosomal subunit protein eL14">
    <location>
        <begin position="1"/>
        <end position="184"/>
    </location>
</feature>
<feature type="region of interest" description="Disordered" evidence="1">
    <location>
        <begin position="149"/>
        <end position="184"/>
    </location>
</feature>
<feature type="compositionally biased region" description="Basic residues" evidence="1">
    <location>
        <begin position="160"/>
        <end position="174"/>
    </location>
</feature>
<reference key="1">
    <citation type="submission" date="1998-10" db="EMBL/GenBank/DDBJ databases">
        <title>Molecular cloning and expression in E.coli of a Leishmanial cell surface protein homolog in African trypanosomes.</title>
        <authorList>
            <person name="Djikeng A."/>
            <person name="Majiwa P.A.O."/>
        </authorList>
    </citation>
    <scope>NUCLEOTIDE SEQUENCE [MRNA]</scope>
    <source>
        <strain>IL3000</strain>
    </source>
</reference>
<protein>
    <recommendedName>
        <fullName evidence="2">Large ribosomal subunit protein eL14</fullName>
    </recommendedName>
    <alternativeName>
        <fullName>23 kDa cell surface protein homolog</fullName>
    </alternativeName>
    <alternativeName>
        <fullName evidence="2">60S ribosomal protein L14</fullName>
    </alternativeName>
</protein>
<keyword id="KW-0687">Ribonucleoprotein</keyword>
<keyword id="KW-0689">Ribosomal protein</keyword>